<gene>
    <name evidence="1" type="primary">murQ</name>
    <name type="ordered locus">Patl_4168</name>
</gene>
<keyword id="KW-0119">Carbohydrate metabolism</keyword>
<keyword id="KW-0456">Lyase</keyword>
<protein>
    <recommendedName>
        <fullName evidence="1">N-acetylmuramic acid 6-phosphate etherase</fullName>
        <shortName evidence="1">MurNAc-6-P etherase</shortName>
        <ecNumber evidence="1">4.2.1.126</ecNumber>
    </recommendedName>
    <alternativeName>
        <fullName evidence="1">N-acetylmuramic acid 6-phosphate hydrolase</fullName>
    </alternativeName>
    <alternativeName>
        <fullName evidence="1">N-acetylmuramic acid 6-phosphate lyase</fullName>
    </alternativeName>
</protein>
<feature type="chain" id="PRO_1000009130" description="N-acetylmuramic acid 6-phosphate etherase">
    <location>
        <begin position="1"/>
        <end position="307"/>
    </location>
</feature>
<feature type="domain" description="SIS" evidence="1">
    <location>
        <begin position="62"/>
        <end position="225"/>
    </location>
</feature>
<feature type="active site" description="Proton donor" evidence="1">
    <location>
        <position position="90"/>
    </location>
</feature>
<feature type="active site" evidence="1">
    <location>
        <position position="121"/>
    </location>
</feature>
<proteinExistence type="inferred from homology"/>
<reference key="1">
    <citation type="submission" date="2006-06" db="EMBL/GenBank/DDBJ databases">
        <title>Complete sequence of Pseudoalteromonas atlantica T6c.</title>
        <authorList>
            <consortium name="US DOE Joint Genome Institute"/>
            <person name="Copeland A."/>
            <person name="Lucas S."/>
            <person name="Lapidus A."/>
            <person name="Barry K."/>
            <person name="Detter J.C."/>
            <person name="Glavina del Rio T."/>
            <person name="Hammon N."/>
            <person name="Israni S."/>
            <person name="Dalin E."/>
            <person name="Tice H."/>
            <person name="Pitluck S."/>
            <person name="Saunders E."/>
            <person name="Brettin T."/>
            <person name="Bruce D."/>
            <person name="Han C."/>
            <person name="Tapia R."/>
            <person name="Gilna P."/>
            <person name="Schmutz J."/>
            <person name="Larimer F."/>
            <person name="Land M."/>
            <person name="Hauser L."/>
            <person name="Kyrpides N."/>
            <person name="Kim E."/>
            <person name="Karls A.C."/>
            <person name="Bartlett D."/>
            <person name="Higgins B.P."/>
            <person name="Richardson P."/>
        </authorList>
    </citation>
    <scope>NUCLEOTIDE SEQUENCE [LARGE SCALE GENOMIC DNA]</scope>
    <source>
        <strain>T6c / ATCC BAA-1087</strain>
    </source>
</reference>
<comment type="function">
    <text evidence="1">Specifically catalyzes the cleavage of the D-lactyl ether substituent of MurNAc 6-phosphate, producing GlcNAc 6-phosphate and D-lactate. Together with AnmK, is also required for the utilization of anhydro-N-acetylmuramic acid (anhMurNAc) either imported from the medium or derived from its own cell wall murein, and thus plays a role in cell wall recycling.</text>
</comment>
<comment type="catalytic activity">
    <reaction evidence="1">
        <text>N-acetyl-D-muramate 6-phosphate + H2O = N-acetyl-D-glucosamine 6-phosphate + (R)-lactate</text>
        <dbReference type="Rhea" id="RHEA:26410"/>
        <dbReference type="ChEBI" id="CHEBI:15377"/>
        <dbReference type="ChEBI" id="CHEBI:16004"/>
        <dbReference type="ChEBI" id="CHEBI:57513"/>
        <dbReference type="ChEBI" id="CHEBI:58722"/>
        <dbReference type="EC" id="4.2.1.126"/>
    </reaction>
</comment>
<comment type="pathway">
    <text evidence="1">Amino-sugar metabolism; 1,6-anhydro-N-acetylmuramate degradation.</text>
</comment>
<comment type="pathway">
    <text evidence="1">Amino-sugar metabolism; N-acetylmuramate degradation.</text>
</comment>
<comment type="pathway">
    <text evidence="1">Cell wall biogenesis; peptidoglycan recycling.</text>
</comment>
<comment type="subunit">
    <text evidence="1">Homodimer.</text>
</comment>
<comment type="miscellaneous">
    <text evidence="1">A lyase-type mechanism (elimination/hydration) is suggested for the cleavage of the lactyl ether bond of MurNAc 6-phosphate, with the formation of an alpha,beta-unsaturated aldehyde intermediate with (E)-stereochemistry, followed by the syn addition of water to give product.</text>
</comment>
<comment type="similarity">
    <text evidence="1">Belongs to the GCKR-like family. MurNAc-6-P etherase subfamily.</text>
</comment>
<name>MURQ_PSEA6</name>
<sequence>MTQVNLLSELNSIASEGRNIDTLDIDTLPTLAILEKINQEDHKVAAAVSAAMADITSGVEAIVSSFNRGGRLVYMGAGTSGRLGILDAVECMPTFSVPEGMVIGLIAGGEKAVIHAVEGAEDDRAMGVADLKALNFSDKDTLVGIAASGRTPYVAAGLEYAKQCKATTIAVNCSPNSVIGQIADIDICAQVGPEVLTGSTRLKSGTAQKLILNMLSTASMIRIGKTYQNLMVDLNASNQKLYARAVRIVMQATDCEEQTAYEALDHANKEVKVAILMILTGVDVQQAREKLAQKQGFLRHAMSQGES</sequence>
<dbReference type="EC" id="4.2.1.126" evidence="1"/>
<dbReference type="EMBL" id="CP000388">
    <property type="protein sequence ID" value="ABG42667.1"/>
    <property type="molecule type" value="Genomic_DNA"/>
</dbReference>
<dbReference type="RefSeq" id="WP_011576858.1">
    <property type="nucleotide sequence ID" value="NC_008228.1"/>
</dbReference>
<dbReference type="SMR" id="Q15N71"/>
<dbReference type="STRING" id="342610.Patl_4168"/>
<dbReference type="KEGG" id="pat:Patl_4168"/>
<dbReference type="eggNOG" id="COG2103">
    <property type="taxonomic scope" value="Bacteria"/>
</dbReference>
<dbReference type="HOGENOM" id="CLU_049049_1_1_6"/>
<dbReference type="OrthoDB" id="9813395at2"/>
<dbReference type="UniPathway" id="UPA00342"/>
<dbReference type="UniPathway" id="UPA00343"/>
<dbReference type="UniPathway" id="UPA00544"/>
<dbReference type="Proteomes" id="UP000001981">
    <property type="component" value="Chromosome"/>
</dbReference>
<dbReference type="GO" id="GO:0097367">
    <property type="term" value="F:carbohydrate derivative binding"/>
    <property type="evidence" value="ECO:0007669"/>
    <property type="project" value="InterPro"/>
</dbReference>
<dbReference type="GO" id="GO:0016835">
    <property type="term" value="F:carbon-oxygen lyase activity"/>
    <property type="evidence" value="ECO:0007669"/>
    <property type="project" value="UniProtKB-UniRule"/>
</dbReference>
<dbReference type="GO" id="GO:0016803">
    <property type="term" value="F:ether hydrolase activity"/>
    <property type="evidence" value="ECO:0007669"/>
    <property type="project" value="TreeGrafter"/>
</dbReference>
<dbReference type="GO" id="GO:0097175">
    <property type="term" value="P:1,6-anhydro-N-acetyl-beta-muramic acid catabolic process"/>
    <property type="evidence" value="ECO:0007669"/>
    <property type="project" value="UniProtKB-UniRule"/>
</dbReference>
<dbReference type="GO" id="GO:0046348">
    <property type="term" value="P:amino sugar catabolic process"/>
    <property type="evidence" value="ECO:0007669"/>
    <property type="project" value="InterPro"/>
</dbReference>
<dbReference type="GO" id="GO:0097173">
    <property type="term" value="P:N-acetylmuramic acid catabolic process"/>
    <property type="evidence" value="ECO:0007669"/>
    <property type="project" value="UniProtKB-UniPathway"/>
</dbReference>
<dbReference type="GO" id="GO:0009254">
    <property type="term" value="P:peptidoglycan turnover"/>
    <property type="evidence" value="ECO:0007669"/>
    <property type="project" value="UniProtKB-UniRule"/>
</dbReference>
<dbReference type="CDD" id="cd05007">
    <property type="entry name" value="SIS_Etherase"/>
    <property type="match status" value="1"/>
</dbReference>
<dbReference type="FunFam" id="1.10.8.1080:FF:000001">
    <property type="entry name" value="N-acetylmuramic acid 6-phosphate etherase"/>
    <property type="match status" value="1"/>
</dbReference>
<dbReference type="FunFam" id="3.40.50.10490:FF:000014">
    <property type="entry name" value="N-acetylmuramic acid 6-phosphate etherase"/>
    <property type="match status" value="1"/>
</dbReference>
<dbReference type="Gene3D" id="1.10.8.1080">
    <property type="match status" value="1"/>
</dbReference>
<dbReference type="Gene3D" id="3.40.50.10490">
    <property type="entry name" value="Glucose-6-phosphate isomerase like protein, domain 1"/>
    <property type="match status" value="1"/>
</dbReference>
<dbReference type="HAMAP" id="MF_00068">
    <property type="entry name" value="MurQ"/>
    <property type="match status" value="1"/>
</dbReference>
<dbReference type="InterPro" id="IPR005488">
    <property type="entry name" value="Etherase_MurQ"/>
</dbReference>
<dbReference type="InterPro" id="IPR005486">
    <property type="entry name" value="Glucokinase_regulatory_CS"/>
</dbReference>
<dbReference type="InterPro" id="IPR040190">
    <property type="entry name" value="MURQ/GCKR"/>
</dbReference>
<dbReference type="InterPro" id="IPR001347">
    <property type="entry name" value="SIS_dom"/>
</dbReference>
<dbReference type="InterPro" id="IPR046348">
    <property type="entry name" value="SIS_dom_sf"/>
</dbReference>
<dbReference type="NCBIfam" id="TIGR00274">
    <property type="entry name" value="N-acetylmuramic acid 6-phosphate etherase"/>
    <property type="match status" value="1"/>
</dbReference>
<dbReference type="NCBIfam" id="NF003915">
    <property type="entry name" value="PRK05441.1"/>
    <property type="match status" value="1"/>
</dbReference>
<dbReference type="NCBIfam" id="NF009222">
    <property type="entry name" value="PRK12570.1"/>
    <property type="match status" value="1"/>
</dbReference>
<dbReference type="PANTHER" id="PTHR10088">
    <property type="entry name" value="GLUCOKINASE REGULATORY PROTEIN"/>
    <property type="match status" value="1"/>
</dbReference>
<dbReference type="PANTHER" id="PTHR10088:SF5">
    <property type="entry name" value="N-ACETYLMURAMIC ACID 6-PHOSPHATE ETHERASE"/>
    <property type="match status" value="1"/>
</dbReference>
<dbReference type="Pfam" id="PF20741">
    <property type="entry name" value="GKRP-like_C"/>
    <property type="match status" value="1"/>
</dbReference>
<dbReference type="Pfam" id="PF22645">
    <property type="entry name" value="GKRP_SIS_N"/>
    <property type="match status" value="1"/>
</dbReference>
<dbReference type="SUPFAM" id="SSF53697">
    <property type="entry name" value="SIS domain"/>
    <property type="match status" value="1"/>
</dbReference>
<dbReference type="PROSITE" id="PS01272">
    <property type="entry name" value="GCKR"/>
    <property type="match status" value="1"/>
</dbReference>
<dbReference type="PROSITE" id="PS51464">
    <property type="entry name" value="SIS"/>
    <property type="match status" value="1"/>
</dbReference>
<accession>Q15N71</accession>
<organism>
    <name type="scientific">Pseudoalteromonas atlantica (strain T6c / ATCC BAA-1087)</name>
    <dbReference type="NCBI Taxonomy" id="3042615"/>
    <lineage>
        <taxon>Bacteria</taxon>
        <taxon>Pseudomonadati</taxon>
        <taxon>Pseudomonadota</taxon>
        <taxon>Gammaproteobacteria</taxon>
        <taxon>Alteromonadales</taxon>
        <taxon>Alteromonadaceae</taxon>
        <taxon>Paraglaciecola</taxon>
    </lineage>
</organism>
<evidence type="ECO:0000255" key="1">
    <source>
        <dbReference type="HAMAP-Rule" id="MF_00068"/>
    </source>
</evidence>